<organism>
    <name type="scientific">Cryptococcus neoformans var. neoformans serotype D (strain JEC21 / ATCC MYA-565)</name>
    <name type="common">Filobasidiella neoformans</name>
    <dbReference type="NCBI Taxonomy" id="214684"/>
    <lineage>
        <taxon>Eukaryota</taxon>
        <taxon>Fungi</taxon>
        <taxon>Dikarya</taxon>
        <taxon>Basidiomycota</taxon>
        <taxon>Agaricomycotina</taxon>
        <taxon>Tremellomycetes</taxon>
        <taxon>Tremellales</taxon>
        <taxon>Cryptococcaceae</taxon>
        <taxon>Cryptococcus</taxon>
        <taxon>Cryptococcus neoformans species complex</taxon>
    </lineage>
</organism>
<gene>
    <name type="primary">ERV25</name>
    <name type="ordered locus">CNB00890</name>
</gene>
<accession>P0CN72</accession>
<accession>Q55X80</accession>
<accession>Q5KMQ3</accession>
<proteinExistence type="inferred from homology"/>
<reference key="1">
    <citation type="journal article" date="2005" name="Science">
        <title>The genome of the basidiomycetous yeast and human pathogen Cryptococcus neoformans.</title>
        <authorList>
            <person name="Loftus B.J."/>
            <person name="Fung E."/>
            <person name="Roncaglia P."/>
            <person name="Rowley D."/>
            <person name="Amedeo P."/>
            <person name="Bruno D."/>
            <person name="Vamathevan J."/>
            <person name="Miranda M."/>
            <person name="Anderson I.J."/>
            <person name="Fraser J.A."/>
            <person name="Allen J.E."/>
            <person name="Bosdet I.E."/>
            <person name="Brent M.R."/>
            <person name="Chiu R."/>
            <person name="Doering T.L."/>
            <person name="Donlin M.J."/>
            <person name="D'Souza C.A."/>
            <person name="Fox D.S."/>
            <person name="Grinberg V."/>
            <person name="Fu J."/>
            <person name="Fukushima M."/>
            <person name="Haas B.J."/>
            <person name="Huang J.C."/>
            <person name="Janbon G."/>
            <person name="Jones S.J.M."/>
            <person name="Koo H.L."/>
            <person name="Krzywinski M.I."/>
            <person name="Kwon-Chung K.J."/>
            <person name="Lengeler K.B."/>
            <person name="Maiti R."/>
            <person name="Marra M.A."/>
            <person name="Marra R.E."/>
            <person name="Mathewson C.A."/>
            <person name="Mitchell T.G."/>
            <person name="Pertea M."/>
            <person name="Riggs F.R."/>
            <person name="Salzberg S.L."/>
            <person name="Schein J.E."/>
            <person name="Shvartsbeyn A."/>
            <person name="Shin H."/>
            <person name="Shumway M."/>
            <person name="Specht C.A."/>
            <person name="Suh B.B."/>
            <person name="Tenney A."/>
            <person name="Utterback T.R."/>
            <person name="Wickes B.L."/>
            <person name="Wortman J.R."/>
            <person name="Wye N.H."/>
            <person name="Kronstad J.W."/>
            <person name="Lodge J.K."/>
            <person name="Heitman J."/>
            <person name="Davis R.W."/>
            <person name="Fraser C.M."/>
            <person name="Hyman R.W."/>
        </authorList>
    </citation>
    <scope>NUCLEOTIDE SEQUENCE [LARGE SCALE GENOMIC DNA]</scope>
    <source>
        <strain>JEC21 / ATCC MYA-565</strain>
    </source>
</reference>
<keyword id="KW-0256">Endoplasmic reticulum</keyword>
<keyword id="KW-0931">ER-Golgi transport</keyword>
<keyword id="KW-0333">Golgi apparatus</keyword>
<keyword id="KW-0472">Membrane</keyword>
<keyword id="KW-0653">Protein transport</keyword>
<keyword id="KW-1185">Reference proteome</keyword>
<keyword id="KW-0732">Signal</keyword>
<keyword id="KW-0812">Transmembrane</keyword>
<keyword id="KW-1133">Transmembrane helix</keyword>
<keyword id="KW-0813">Transport</keyword>
<comment type="function">
    <text evidence="1">Constituent of COPII-coated endoplasmic reticulum-derived transport vesicles. Required for efficient transport of a subset of secretory proteins to the Golgi. Facilitates retrograde transport from the Golgi to the endoplasmic reticulum (By similarity).</text>
</comment>
<comment type="subcellular location">
    <subcellularLocation>
        <location evidence="1">Endoplasmic reticulum membrane</location>
        <topology evidence="1">Single-pass type I membrane protein</topology>
    </subcellularLocation>
    <subcellularLocation>
        <location evidence="1">Golgi apparatus membrane</location>
        <topology evidence="1">Single-pass type I membrane protein</topology>
    </subcellularLocation>
    <text evidence="1">Recycles between endoplasmic reticulum and Golgi.</text>
</comment>
<comment type="similarity">
    <text evidence="4">Belongs to the EMP24/GP25L family.</text>
</comment>
<sequence>MILRIPSLLYLFTLLTAVYAVKFDLTSDRNPKPKCIWNFASAHSLVIVTANVPGEPDQQVDIQILDGSERGNVYLSKKDVRGEARLAVTTHESADVGVCLTNRYTGSGNPRVVRSVELDVDIGADAIDYNAIANQESLSILEVEMRKLEAVTKEIVEEMGYLQRREMRMRDTNESTNQRVKVFSVLIICCTIGLGVWQLLHLRSFFKRKYLID</sequence>
<evidence type="ECO:0000250" key="1"/>
<evidence type="ECO:0000255" key="2"/>
<evidence type="ECO:0000255" key="3">
    <source>
        <dbReference type="PROSITE-ProRule" id="PRU00096"/>
    </source>
</evidence>
<evidence type="ECO:0000305" key="4"/>
<feature type="signal peptide" evidence="2">
    <location>
        <begin position="1"/>
        <end position="20"/>
    </location>
</feature>
<feature type="chain" id="PRO_0000237691" description="Endoplasmic reticulum vesicle protein 25">
    <location>
        <begin position="21"/>
        <end position="213"/>
    </location>
</feature>
<feature type="topological domain" description="Lumenal" evidence="2">
    <location>
        <begin position="21"/>
        <end position="181"/>
    </location>
</feature>
<feature type="transmembrane region" description="Helical" evidence="2">
    <location>
        <begin position="182"/>
        <end position="202"/>
    </location>
</feature>
<feature type="topological domain" description="Cytoplasmic" evidence="2">
    <location>
        <begin position="203"/>
        <end position="213"/>
    </location>
</feature>
<feature type="domain" description="GOLD" evidence="3">
    <location>
        <begin position="33"/>
        <end position="122"/>
    </location>
</feature>
<protein>
    <recommendedName>
        <fullName>Endoplasmic reticulum vesicle protein 25</fullName>
    </recommendedName>
</protein>
<name>TMEDA_CRYNJ</name>
<dbReference type="EMBL" id="AE017342">
    <property type="protein sequence ID" value="AAW41789.1"/>
    <property type="molecule type" value="Genomic_DNA"/>
</dbReference>
<dbReference type="RefSeq" id="XP_569096.1">
    <property type="nucleotide sequence ID" value="XM_569096.1"/>
</dbReference>
<dbReference type="SMR" id="P0CN72"/>
<dbReference type="FunCoup" id="P0CN72">
    <property type="interactions" value="675"/>
</dbReference>
<dbReference type="STRING" id="214684.P0CN72"/>
<dbReference type="PaxDb" id="214684-P0CN72"/>
<dbReference type="EnsemblFungi" id="AAW41789">
    <property type="protein sequence ID" value="AAW41789"/>
    <property type="gene ID" value="CNB00890"/>
</dbReference>
<dbReference type="GeneID" id="3256051"/>
<dbReference type="KEGG" id="cne:CNB00890"/>
<dbReference type="VEuPathDB" id="FungiDB:CNB00890"/>
<dbReference type="eggNOG" id="KOG1691">
    <property type="taxonomic scope" value="Eukaryota"/>
</dbReference>
<dbReference type="HOGENOM" id="CLU_066963_3_0_1"/>
<dbReference type="InParanoid" id="P0CN72"/>
<dbReference type="OMA" id="DVFEACF"/>
<dbReference type="OrthoDB" id="759142at2759"/>
<dbReference type="Proteomes" id="UP000002149">
    <property type="component" value="Chromosome 2"/>
</dbReference>
<dbReference type="GO" id="GO:0030134">
    <property type="term" value="C:COPII-coated ER to Golgi transport vesicle"/>
    <property type="evidence" value="ECO:0000318"/>
    <property type="project" value="GO_Central"/>
</dbReference>
<dbReference type="GO" id="GO:0005783">
    <property type="term" value="C:endoplasmic reticulum"/>
    <property type="evidence" value="ECO:0000318"/>
    <property type="project" value="GO_Central"/>
</dbReference>
<dbReference type="GO" id="GO:0005789">
    <property type="term" value="C:endoplasmic reticulum membrane"/>
    <property type="evidence" value="ECO:0007669"/>
    <property type="project" value="UniProtKB-SubCell"/>
</dbReference>
<dbReference type="GO" id="GO:0005793">
    <property type="term" value="C:endoplasmic reticulum-Golgi intermediate compartment"/>
    <property type="evidence" value="ECO:0000318"/>
    <property type="project" value="GO_Central"/>
</dbReference>
<dbReference type="GO" id="GO:0005794">
    <property type="term" value="C:Golgi apparatus"/>
    <property type="evidence" value="ECO:0000318"/>
    <property type="project" value="GO_Central"/>
</dbReference>
<dbReference type="GO" id="GO:0000139">
    <property type="term" value="C:Golgi membrane"/>
    <property type="evidence" value="ECO:0007669"/>
    <property type="project" value="UniProtKB-SubCell"/>
</dbReference>
<dbReference type="GO" id="GO:0006888">
    <property type="term" value="P:endoplasmic reticulum to Golgi vesicle-mediated transport"/>
    <property type="evidence" value="ECO:0000318"/>
    <property type="project" value="GO_Central"/>
</dbReference>
<dbReference type="GO" id="GO:0007030">
    <property type="term" value="P:Golgi organization"/>
    <property type="evidence" value="ECO:0000318"/>
    <property type="project" value="GO_Central"/>
</dbReference>
<dbReference type="GO" id="GO:0006886">
    <property type="term" value="P:intracellular protein transport"/>
    <property type="evidence" value="ECO:0000318"/>
    <property type="project" value="GO_Central"/>
</dbReference>
<dbReference type="InterPro" id="IPR015720">
    <property type="entry name" value="Emp24-like"/>
</dbReference>
<dbReference type="InterPro" id="IPR009038">
    <property type="entry name" value="GOLD_dom"/>
</dbReference>
<dbReference type="PANTHER" id="PTHR22811">
    <property type="entry name" value="TRANSMEMBRANE EMP24 DOMAIN-CONTAINING PROTEIN"/>
    <property type="match status" value="1"/>
</dbReference>
<dbReference type="Pfam" id="PF01105">
    <property type="entry name" value="EMP24_GP25L"/>
    <property type="match status" value="1"/>
</dbReference>
<dbReference type="SMART" id="SM01190">
    <property type="entry name" value="EMP24_GP25L"/>
    <property type="match status" value="1"/>
</dbReference>
<dbReference type="PROSITE" id="PS50866">
    <property type="entry name" value="GOLD"/>
    <property type="match status" value="1"/>
</dbReference>